<feature type="chain" id="PRO_0000400353" description="ATP-dependent zinc metalloprotease FtsH 1">
    <location>
        <begin position="1"/>
        <end position="636"/>
    </location>
</feature>
<feature type="topological domain" description="Cytoplasmic" evidence="1">
    <location>
        <begin position="1"/>
        <end position="18"/>
    </location>
</feature>
<feature type="transmembrane region" description="Helical" evidence="1">
    <location>
        <begin position="19"/>
        <end position="39"/>
    </location>
</feature>
<feature type="topological domain" description="Periplasmic" evidence="1">
    <location>
        <begin position="40"/>
        <end position="126"/>
    </location>
</feature>
<feature type="transmembrane region" description="Helical" evidence="1">
    <location>
        <begin position="127"/>
        <end position="147"/>
    </location>
</feature>
<feature type="topological domain" description="Cytoplasmic" evidence="1">
    <location>
        <begin position="148"/>
        <end position="636"/>
    </location>
</feature>
<feature type="active site" evidence="1">
    <location>
        <position position="443"/>
    </location>
</feature>
<feature type="binding site" evidence="1">
    <location>
        <begin position="220"/>
        <end position="227"/>
    </location>
    <ligand>
        <name>ATP</name>
        <dbReference type="ChEBI" id="CHEBI:30616"/>
    </ligand>
</feature>
<feature type="binding site" evidence="1">
    <location>
        <position position="442"/>
    </location>
    <ligand>
        <name>Zn(2+)</name>
        <dbReference type="ChEBI" id="CHEBI:29105"/>
        <note>catalytic</note>
    </ligand>
</feature>
<feature type="binding site" evidence="1">
    <location>
        <position position="446"/>
    </location>
    <ligand>
        <name>Zn(2+)</name>
        <dbReference type="ChEBI" id="CHEBI:29105"/>
        <note>catalytic</note>
    </ligand>
</feature>
<feature type="binding site" evidence="1">
    <location>
        <position position="519"/>
    </location>
    <ligand>
        <name>Zn(2+)</name>
        <dbReference type="ChEBI" id="CHEBI:29105"/>
        <note>catalytic</note>
    </ligand>
</feature>
<comment type="function">
    <text evidence="1">Acts as a processive, ATP-dependent zinc metallopeptidase for both cytoplasmic and membrane proteins. Plays a role in the quality control of integral membrane proteins.</text>
</comment>
<comment type="cofactor">
    <cofactor evidence="1">
        <name>Zn(2+)</name>
        <dbReference type="ChEBI" id="CHEBI:29105"/>
    </cofactor>
    <text evidence="1">Binds 1 zinc ion per subunit.</text>
</comment>
<comment type="subunit">
    <text evidence="1">Homohexamer.</text>
</comment>
<comment type="subcellular location">
    <subcellularLocation>
        <location evidence="1">Cell inner membrane</location>
        <topology evidence="1">Multi-pass membrane protein</topology>
        <orientation evidence="1">Cytoplasmic side</orientation>
    </subcellularLocation>
</comment>
<comment type="similarity">
    <text evidence="1">In the central section; belongs to the AAA ATPase family.</text>
</comment>
<comment type="similarity">
    <text evidence="1">In the C-terminal section; belongs to the peptidase M41 family.</text>
</comment>
<organism>
    <name type="scientific">Methylacidiphilum infernorum (isolate V4)</name>
    <name type="common">Methylokorus infernorum (strain V4)</name>
    <dbReference type="NCBI Taxonomy" id="481448"/>
    <lineage>
        <taxon>Bacteria</taxon>
        <taxon>Pseudomonadati</taxon>
        <taxon>Verrucomicrobiota</taxon>
        <taxon>Methylacidiphilae</taxon>
        <taxon>Methylacidiphilales</taxon>
        <taxon>Methylacidiphilaceae</taxon>
        <taxon>Methylacidiphilum (ex Ratnadevi et al. 2023)</taxon>
    </lineage>
</organism>
<proteinExistence type="inferred from homology"/>
<accession>B3DV46</accession>
<dbReference type="EC" id="3.4.24.-" evidence="1"/>
<dbReference type="EMBL" id="CP000975">
    <property type="protein sequence ID" value="ACD83199.1"/>
    <property type="molecule type" value="Genomic_DNA"/>
</dbReference>
<dbReference type="RefSeq" id="WP_012463481.1">
    <property type="nucleotide sequence ID" value="NC_010794.1"/>
</dbReference>
<dbReference type="SMR" id="B3DV46"/>
<dbReference type="STRING" id="481448.Minf_1144"/>
<dbReference type="MEROPS" id="M41.021"/>
<dbReference type="KEGG" id="min:Minf_1144"/>
<dbReference type="eggNOG" id="COG0465">
    <property type="taxonomic scope" value="Bacteria"/>
</dbReference>
<dbReference type="HOGENOM" id="CLU_000688_16_2_0"/>
<dbReference type="OrthoDB" id="9809379at2"/>
<dbReference type="Proteomes" id="UP000009149">
    <property type="component" value="Chromosome"/>
</dbReference>
<dbReference type="GO" id="GO:0005886">
    <property type="term" value="C:plasma membrane"/>
    <property type="evidence" value="ECO:0007669"/>
    <property type="project" value="UniProtKB-SubCell"/>
</dbReference>
<dbReference type="GO" id="GO:0005524">
    <property type="term" value="F:ATP binding"/>
    <property type="evidence" value="ECO:0007669"/>
    <property type="project" value="UniProtKB-UniRule"/>
</dbReference>
<dbReference type="GO" id="GO:0016887">
    <property type="term" value="F:ATP hydrolysis activity"/>
    <property type="evidence" value="ECO:0007669"/>
    <property type="project" value="UniProtKB-UniRule"/>
</dbReference>
<dbReference type="GO" id="GO:0004176">
    <property type="term" value="F:ATP-dependent peptidase activity"/>
    <property type="evidence" value="ECO:0007669"/>
    <property type="project" value="InterPro"/>
</dbReference>
<dbReference type="GO" id="GO:0004222">
    <property type="term" value="F:metalloendopeptidase activity"/>
    <property type="evidence" value="ECO:0007669"/>
    <property type="project" value="InterPro"/>
</dbReference>
<dbReference type="GO" id="GO:0008270">
    <property type="term" value="F:zinc ion binding"/>
    <property type="evidence" value="ECO:0007669"/>
    <property type="project" value="UniProtKB-UniRule"/>
</dbReference>
<dbReference type="GO" id="GO:0030163">
    <property type="term" value="P:protein catabolic process"/>
    <property type="evidence" value="ECO:0007669"/>
    <property type="project" value="UniProtKB-UniRule"/>
</dbReference>
<dbReference type="GO" id="GO:0006508">
    <property type="term" value="P:proteolysis"/>
    <property type="evidence" value="ECO:0007669"/>
    <property type="project" value="UniProtKB-KW"/>
</dbReference>
<dbReference type="CDD" id="cd19501">
    <property type="entry name" value="RecA-like_FtsH"/>
    <property type="match status" value="1"/>
</dbReference>
<dbReference type="FunFam" id="1.10.8.60:FF:000001">
    <property type="entry name" value="ATP-dependent zinc metalloprotease FtsH"/>
    <property type="match status" value="1"/>
</dbReference>
<dbReference type="FunFam" id="1.20.58.760:FF:000001">
    <property type="entry name" value="ATP-dependent zinc metalloprotease FtsH"/>
    <property type="match status" value="1"/>
</dbReference>
<dbReference type="FunFam" id="3.40.50.300:FF:000001">
    <property type="entry name" value="ATP-dependent zinc metalloprotease FtsH"/>
    <property type="match status" value="1"/>
</dbReference>
<dbReference type="Gene3D" id="1.10.8.60">
    <property type="match status" value="1"/>
</dbReference>
<dbReference type="Gene3D" id="3.30.720.210">
    <property type="match status" value="1"/>
</dbReference>
<dbReference type="Gene3D" id="3.40.50.300">
    <property type="entry name" value="P-loop containing nucleotide triphosphate hydrolases"/>
    <property type="match status" value="1"/>
</dbReference>
<dbReference type="Gene3D" id="1.20.58.760">
    <property type="entry name" value="Peptidase M41"/>
    <property type="match status" value="1"/>
</dbReference>
<dbReference type="HAMAP" id="MF_01458">
    <property type="entry name" value="FtsH"/>
    <property type="match status" value="1"/>
</dbReference>
<dbReference type="InterPro" id="IPR003593">
    <property type="entry name" value="AAA+_ATPase"/>
</dbReference>
<dbReference type="InterPro" id="IPR041569">
    <property type="entry name" value="AAA_lid_3"/>
</dbReference>
<dbReference type="InterPro" id="IPR003959">
    <property type="entry name" value="ATPase_AAA_core"/>
</dbReference>
<dbReference type="InterPro" id="IPR003960">
    <property type="entry name" value="ATPase_AAA_CS"/>
</dbReference>
<dbReference type="InterPro" id="IPR005936">
    <property type="entry name" value="FtsH"/>
</dbReference>
<dbReference type="InterPro" id="IPR027417">
    <property type="entry name" value="P-loop_NTPase"/>
</dbReference>
<dbReference type="InterPro" id="IPR011546">
    <property type="entry name" value="Pept_M41_FtsH_extracell"/>
</dbReference>
<dbReference type="InterPro" id="IPR000642">
    <property type="entry name" value="Peptidase_M41"/>
</dbReference>
<dbReference type="InterPro" id="IPR037219">
    <property type="entry name" value="Peptidase_M41-like"/>
</dbReference>
<dbReference type="NCBIfam" id="TIGR01241">
    <property type="entry name" value="FtsH_fam"/>
    <property type="match status" value="1"/>
</dbReference>
<dbReference type="PANTHER" id="PTHR23076:SF97">
    <property type="entry name" value="ATP-DEPENDENT ZINC METALLOPROTEASE YME1L1"/>
    <property type="match status" value="1"/>
</dbReference>
<dbReference type="PANTHER" id="PTHR23076">
    <property type="entry name" value="METALLOPROTEASE M41 FTSH"/>
    <property type="match status" value="1"/>
</dbReference>
<dbReference type="Pfam" id="PF00004">
    <property type="entry name" value="AAA"/>
    <property type="match status" value="1"/>
</dbReference>
<dbReference type="Pfam" id="PF17862">
    <property type="entry name" value="AAA_lid_3"/>
    <property type="match status" value="1"/>
</dbReference>
<dbReference type="Pfam" id="PF06480">
    <property type="entry name" value="FtsH_ext"/>
    <property type="match status" value="1"/>
</dbReference>
<dbReference type="Pfam" id="PF01434">
    <property type="entry name" value="Peptidase_M41"/>
    <property type="match status" value="1"/>
</dbReference>
<dbReference type="SMART" id="SM00382">
    <property type="entry name" value="AAA"/>
    <property type="match status" value="1"/>
</dbReference>
<dbReference type="SUPFAM" id="SSF140990">
    <property type="entry name" value="FtsH protease domain-like"/>
    <property type="match status" value="1"/>
</dbReference>
<dbReference type="SUPFAM" id="SSF52540">
    <property type="entry name" value="P-loop containing nucleoside triphosphate hydrolases"/>
    <property type="match status" value="1"/>
</dbReference>
<dbReference type="PROSITE" id="PS00674">
    <property type="entry name" value="AAA"/>
    <property type="match status" value="1"/>
</dbReference>
<reference key="1">
    <citation type="journal article" date="2008" name="Biol. Direct">
        <title>Complete genome sequence of the extremely acidophilic methanotroph isolate V4, Methylacidiphilum infernorum, a representative of the bacterial phylum Verrucomicrobia.</title>
        <authorList>
            <person name="Hou S."/>
            <person name="Makarova K.S."/>
            <person name="Saw J.H."/>
            <person name="Senin P."/>
            <person name="Ly B.V."/>
            <person name="Zhou Z."/>
            <person name="Ren Y."/>
            <person name="Wang J."/>
            <person name="Galperin M.Y."/>
            <person name="Omelchenko M.V."/>
            <person name="Wolf Y.I."/>
            <person name="Yutin N."/>
            <person name="Koonin E.V."/>
            <person name="Stott M.B."/>
            <person name="Mountain B.W."/>
            <person name="Crowe M.A."/>
            <person name="Smirnova A.V."/>
            <person name="Dunfield P.F."/>
            <person name="Feng L."/>
            <person name="Wang L."/>
            <person name="Alam M."/>
        </authorList>
    </citation>
    <scope>NUCLEOTIDE SEQUENCE [LARGE SCALE GENOMIC DNA]</scope>
    <source>
        <strain>Isolate V4</strain>
    </source>
</reference>
<evidence type="ECO:0000255" key="1">
    <source>
        <dbReference type="HAMAP-Rule" id="MF_01458"/>
    </source>
</evidence>
<name>FTSH1_METI4</name>
<gene>
    <name evidence="1" type="primary">ftsH1</name>
    <name type="ordered locus">Minf_1144</name>
</gene>
<sequence>MKLSPPKKNLPPQKNNEPPFPYLRLLVQVGIALFLVWIWQESLHKATVSTIPYSEFLNKINQKEIIECKITPDEIYGKMLVSKPEEKGQPPKIALFSTVRVDDPDLVKRLQSAGVVYGSVKPSLLSQILFSWVVPILIFFLVWFALARFMGGGGAGYSLLNIGKSRARLLVDESTGVTFADVAGCDEAKYELQEVVDFLKNPSRYRALGAKIPKGVLLVGPPGTGKTLLAKAVAGEAKVPFFSISGSEFVEMFVGVGAARVRDLFGQAKSKAPCIVFIDELDAIGRQRGVRIQVGSDEHEQTLNQLLVEMDGFDPNEGIIVLAATNRPEILDRALLRPGRFDRQVVVDLPDANGREAILRVHARGKPLSENIDFKEIAQATMGFSGADLANLLNEAALLAARRKSSRIEQVDLLEAMEKVIAGPERKSRVLSEKERERVAYHEVGHALVAFYSEHAEPVRKISIVPRGKSALGYTLQLPTAQKYLLSKSELLDRICVAMGGRAAEELIYGDITTGAENDLEVATTIARQMVCLYGMGEKSGLAHYVPPQPLLGGLDTSYLKECSDETARIIDLEIEKILEENYQRALSILRHHHVELKEVTKYLLQKETLNAEEFKSILENLKEQRKEAPSYSSTL</sequence>
<keyword id="KW-0067">ATP-binding</keyword>
<keyword id="KW-0997">Cell inner membrane</keyword>
<keyword id="KW-1003">Cell membrane</keyword>
<keyword id="KW-0378">Hydrolase</keyword>
<keyword id="KW-0472">Membrane</keyword>
<keyword id="KW-0479">Metal-binding</keyword>
<keyword id="KW-0482">Metalloprotease</keyword>
<keyword id="KW-0547">Nucleotide-binding</keyword>
<keyword id="KW-0645">Protease</keyword>
<keyword id="KW-0812">Transmembrane</keyword>
<keyword id="KW-1133">Transmembrane helix</keyword>
<keyword id="KW-0862">Zinc</keyword>
<protein>
    <recommendedName>
        <fullName evidence="1">ATP-dependent zinc metalloprotease FtsH 1</fullName>
        <ecNumber evidence="1">3.4.24.-</ecNumber>
    </recommendedName>
</protein>